<organism>
    <name type="scientific">Autographa californica nuclear polyhedrosis virus</name>
    <name type="common">AcMNPV</name>
    <dbReference type="NCBI Taxonomy" id="46015"/>
    <lineage>
        <taxon>Viruses</taxon>
        <taxon>Viruses incertae sedis</taxon>
        <taxon>Naldaviricetes</taxon>
        <taxon>Lefavirales</taxon>
        <taxon>Baculoviridae</taxon>
        <taxon>Alphabaculovirus</taxon>
        <taxon>Alphabaculovirus aucalifornicae</taxon>
    </lineage>
</organism>
<evidence type="ECO:0000250" key="1">
    <source>
        <dbReference type="UniProtKB" id="Q90173"/>
    </source>
</evidence>
<evidence type="ECO:0000255" key="2">
    <source>
        <dbReference type="PROSITE-ProRule" id="PRU00175"/>
    </source>
</evidence>
<evidence type="ECO:0000305" key="3"/>
<proteinExistence type="inferred from homology"/>
<reference key="1">
    <citation type="journal article" date="1989" name="J. Virol.">
        <title>A baculovirus gene with a novel transcription pattern encodes a polypeptide with a zinc finger and a leucine zipper.</title>
        <authorList>
            <person name="Thiem S.M."/>
            <person name="Miller L.K."/>
        </authorList>
    </citation>
    <scope>NUCLEOTIDE SEQUENCE [GENOMIC DNA]</scope>
    <source>
        <strain>L1</strain>
    </source>
</reference>
<reference key="2">
    <citation type="journal article" date="1994" name="Virology">
        <title>The complete DNA sequence of Autographa californica nuclear polyhedrosis virus.</title>
        <authorList>
            <person name="Ayres M.D."/>
            <person name="Howard S.C."/>
            <person name="Kuzio J."/>
            <person name="Lopez-Ferber M."/>
            <person name="Possee R.D."/>
        </authorList>
    </citation>
    <scope>NUCLEOTIDE SEQUENCE [LARGE SCALE GENOMIC DNA]</scope>
    <source>
        <strain>C6</strain>
    </source>
</reference>
<dbReference type="EMBL" id="M26529">
    <property type="protein sequence ID" value="AAA46754.1"/>
    <property type="molecule type" value="Genomic_DNA"/>
</dbReference>
<dbReference type="EMBL" id="M33604">
    <property type="protein sequence ID" value="AAA46690.1"/>
    <property type="molecule type" value="Genomic_DNA"/>
</dbReference>
<dbReference type="EMBL" id="L22858">
    <property type="protein sequence ID" value="AAA66718.1"/>
    <property type="molecule type" value="Genomic_DNA"/>
</dbReference>
<dbReference type="PIR" id="A33324">
    <property type="entry name" value="DNNVAL"/>
</dbReference>
<dbReference type="SMR" id="P16091"/>
<dbReference type="KEGG" id="vg:1403921"/>
<dbReference type="OrthoDB" id="8894at10239"/>
<dbReference type="Proteomes" id="UP000008292">
    <property type="component" value="Segment"/>
</dbReference>
<dbReference type="GO" id="GO:0042025">
    <property type="term" value="C:host cell nucleus"/>
    <property type="evidence" value="ECO:0007669"/>
    <property type="project" value="UniProtKB-SubCell"/>
</dbReference>
<dbReference type="GO" id="GO:0008270">
    <property type="term" value="F:zinc ion binding"/>
    <property type="evidence" value="ECO:0007669"/>
    <property type="project" value="UniProtKB-KW"/>
</dbReference>
<dbReference type="Gene3D" id="3.30.40.10">
    <property type="entry name" value="Zinc/RING finger domain, C3HC4 (zinc finger)"/>
    <property type="match status" value="1"/>
</dbReference>
<dbReference type="InterPro" id="IPR018957">
    <property type="entry name" value="Znf_C3HC4_RING-type"/>
</dbReference>
<dbReference type="InterPro" id="IPR001841">
    <property type="entry name" value="Znf_RING"/>
</dbReference>
<dbReference type="InterPro" id="IPR013083">
    <property type="entry name" value="Znf_RING/FYVE/PHD"/>
</dbReference>
<dbReference type="InterPro" id="IPR017907">
    <property type="entry name" value="Znf_RING_CS"/>
</dbReference>
<dbReference type="Pfam" id="PF00097">
    <property type="entry name" value="zf-C3HC4"/>
    <property type="match status" value="1"/>
</dbReference>
<dbReference type="SMART" id="SM00184">
    <property type="entry name" value="RING"/>
    <property type="match status" value="1"/>
</dbReference>
<dbReference type="SUPFAM" id="SSF57850">
    <property type="entry name" value="RING/U-box"/>
    <property type="match status" value="1"/>
</dbReference>
<dbReference type="PROSITE" id="PS00518">
    <property type="entry name" value="ZF_RING_1"/>
    <property type="match status" value="1"/>
</dbReference>
<dbReference type="PROSITE" id="PS50089">
    <property type="entry name" value="ZF_RING_2"/>
    <property type="match status" value="1"/>
</dbReference>
<gene>
    <name type="primary">CG30</name>
</gene>
<protein>
    <recommendedName>
        <fullName>Zinc finger protein CG30</fullName>
    </recommendedName>
</protein>
<organismHost>
    <name type="scientific">Lepidoptera</name>
    <name type="common">butterflies and moths</name>
    <dbReference type="NCBI Taxonomy" id="7088"/>
</organismHost>
<accession>P16091</accession>
<accession>Q65333</accession>
<sequence>MEFVKLQCNICFSVAEIKNYFLQPIDRLTIIPVLELDTCKHQLCSMCIRKIRKRKKVPCPLCRVESLHFNVYSVNRNVVDVIKCSASSVAQWNKINANFDAASLASVLFEKSLLDDAEDNNANADDTMLSEAQAILKKLQVDIAEQTQLNIKQQLDLDKLQQTSVSMQEKLDKIKSDYNNMHKSFKELQLKRITTEKALKSLNDDYAKLASKNAKLSSENKVLSNKNIELIKHKNLLQNEYTTLQSYKCITNATITTNVTINVD</sequence>
<name>CG30_NPVAC</name>
<keyword id="KW-1048">Host nucleus</keyword>
<keyword id="KW-0479">Metal-binding</keyword>
<keyword id="KW-1185">Reference proteome</keyword>
<keyword id="KW-0862">Zinc</keyword>
<keyword id="KW-0863">Zinc-finger</keyword>
<comment type="function">
    <text evidence="1">Plays a role in the proper expression of late and very late genes.</text>
</comment>
<comment type="subcellular location">
    <subcellularLocation>
        <location evidence="1">Host nucleus</location>
    </subcellularLocation>
</comment>
<feature type="chain" id="PRO_0000056344" description="Zinc finger protein CG30">
    <location>
        <begin position="1"/>
        <end position="264"/>
    </location>
</feature>
<feature type="zinc finger region" description="RING-type" evidence="2">
    <location>
        <begin position="8"/>
        <end position="63"/>
    </location>
</feature>
<feature type="sequence conflict" description="In Ref. 1; AAA46690." evidence="3" ref="1">
    <original>Q</original>
    <variation>E</variation>
    <location>
        <position position="161"/>
    </location>
</feature>